<keyword id="KW-0238">DNA-binding</keyword>
<gene>
    <name evidence="1" type="primary">sfsA</name>
    <name type="ordered locus">SCH_0187</name>
</gene>
<proteinExistence type="inferred from homology"/>
<organism>
    <name type="scientific">Salmonella choleraesuis (strain SC-B67)</name>
    <dbReference type="NCBI Taxonomy" id="321314"/>
    <lineage>
        <taxon>Bacteria</taxon>
        <taxon>Pseudomonadati</taxon>
        <taxon>Pseudomonadota</taxon>
        <taxon>Gammaproteobacteria</taxon>
        <taxon>Enterobacterales</taxon>
        <taxon>Enterobacteriaceae</taxon>
        <taxon>Salmonella</taxon>
    </lineage>
</organism>
<comment type="function">
    <text evidence="1">Binds to DNA non-specifically. Could be a regulatory factor involved in maltose metabolism.</text>
</comment>
<comment type="similarity">
    <text evidence="1">Belongs to the SfsA family.</text>
</comment>
<dbReference type="EMBL" id="AE017220">
    <property type="protein sequence ID" value="AAX64093.1"/>
    <property type="molecule type" value="Genomic_DNA"/>
</dbReference>
<dbReference type="RefSeq" id="WP_000899408.1">
    <property type="nucleotide sequence ID" value="NC_006905.1"/>
</dbReference>
<dbReference type="SMR" id="Q57T68"/>
<dbReference type="KEGG" id="sec:SCH_0187"/>
<dbReference type="HOGENOM" id="CLU_052299_2_0_6"/>
<dbReference type="Proteomes" id="UP000000538">
    <property type="component" value="Chromosome"/>
</dbReference>
<dbReference type="GO" id="GO:0003677">
    <property type="term" value="F:DNA binding"/>
    <property type="evidence" value="ECO:0007669"/>
    <property type="project" value="UniProtKB-KW"/>
</dbReference>
<dbReference type="CDD" id="cd22359">
    <property type="entry name" value="SfsA-like_bacterial"/>
    <property type="match status" value="1"/>
</dbReference>
<dbReference type="FunFam" id="2.40.50.580:FF:000001">
    <property type="entry name" value="Sugar fermentation stimulation protein A"/>
    <property type="match status" value="1"/>
</dbReference>
<dbReference type="FunFam" id="3.40.1350.60:FF:000001">
    <property type="entry name" value="Sugar fermentation stimulation protein A"/>
    <property type="match status" value="1"/>
</dbReference>
<dbReference type="Gene3D" id="2.40.50.580">
    <property type="match status" value="1"/>
</dbReference>
<dbReference type="Gene3D" id="3.40.1350.60">
    <property type="match status" value="1"/>
</dbReference>
<dbReference type="HAMAP" id="MF_00095">
    <property type="entry name" value="SfsA"/>
    <property type="match status" value="1"/>
</dbReference>
<dbReference type="InterPro" id="IPR005224">
    <property type="entry name" value="SfsA"/>
</dbReference>
<dbReference type="InterPro" id="IPR040452">
    <property type="entry name" value="SfsA_C"/>
</dbReference>
<dbReference type="InterPro" id="IPR041465">
    <property type="entry name" value="SfsA_N"/>
</dbReference>
<dbReference type="NCBIfam" id="TIGR00230">
    <property type="entry name" value="sfsA"/>
    <property type="match status" value="1"/>
</dbReference>
<dbReference type="PANTHER" id="PTHR30545">
    <property type="entry name" value="SUGAR FERMENTATION STIMULATION PROTEIN A"/>
    <property type="match status" value="1"/>
</dbReference>
<dbReference type="PANTHER" id="PTHR30545:SF2">
    <property type="entry name" value="SUGAR FERMENTATION STIMULATION PROTEIN A"/>
    <property type="match status" value="1"/>
</dbReference>
<dbReference type="Pfam" id="PF03749">
    <property type="entry name" value="SfsA"/>
    <property type="match status" value="1"/>
</dbReference>
<dbReference type="Pfam" id="PF17746">
    <property type="entry name" value="SfsA_N"/>
    <property type="match status" value="1"/>
</dbReference>
<evidence type="ECO:0000255" key="1">
    <source>
        <dbReference type="HAMAP-Rule" id="MF_00095"/>
    </source>
</evidence>
<accession>Q57T68</accession>
<feature type="chain" id="PRO_1000008020" description="Sugar fermentation stimulation protein A">
    <location>
        <begin position="1"/>
        <end position="234"/>
    </location>
</feature>
<feature type="DNA-binding region" description="H-T-H motif" evidence="1">
    <location>
        <begin position="201"/>
        <end position="220"/>
    </location>
</feature>
<sequence>MLFSPPLQRATLIQRYKRFLADVITPDGTTLTLHCPNTGAMTGCATPGDTVWYSTSENTKRKYPHTWELTETQFGAFICVNTLRANQLTKEAIQENRLPALAGYNILKSEVKYGAERSRIDFMLQADFRPDCYIEVKSVTLAEKENGYFPDAITERGQKHLRELMGVAAAGHRAVVVFAVLHSAITRFSPARHIDIKYAQLLSEAQNKGVEVLAYKAELSAQKMELNEPVPITL</sequence>
<reference key="1">
    <citation type="journal article" date="2005" name="Nucleic Acids Res.">
        <title>The genome sequence of Salmonella enterica serovar Choleraesuis, a highly invasive and resistant zoonotic pathogen.</title>
        <authorList>
            <person name="Chiu C.-H."/>
            <person name="Tang P."/>
            <person name="Chu C."/>
            <person name="Hu S."/>
            <person name="Bao Q."/>
            <person name="Yu J."/>
            <person name="Chou Y.-Y."/>
            <person name="Wang H.-S."/>
            <person name="Lee Y.-S."/>
        </authorList>
    </citation>
    <scope>NUCLEOTIDE SEQUENCE [LARGE SCALE GENOMIC DNA]</scope>
    <source>
        <strain>SC-B67</strain>
    </source>
</reference>
<name>SFSA_SALCH</name>
<protein>
    <recommendedName>
        <fullName evidence="1">Sugar fermentation stimulation protein A</fullName>
    </recommendedName>
</protein>